<feature type="chain" id="PRO_0000234488" description="Cilia- and flagella-associated protein 100">
    <location>
        <begin position="1"/>
        <end position="608"/>
    </location>
</feature>
<feature type="region of interest" description="Disordered" evidence="4">
    <location>
        <begin position="1"/>
        <end position="57"/>
    </location>
</feature>
<feature type="region of interest" description="Disordered" evidence="4">
    <location>
        <begin position="291"/>
        <end position="320"/>
    </location>
</feature>
<feature type="region of interest" description="Disordered" evidence="4">
    <location>
        <begin position="339"/>
        <end position="377"/>
    </location>
</feature>
<feature type="coiled-coil region" evidence="3">
    <location>
        <begin position="164"/>
        <end position="196"/>
    </location>
</feature>
<feature type="coiled-coil region" evidence="3">
    <location>
        <begin position="230"/>
        <end position="257"/>
    </location>
</feature>
<feature type="coiled-coil region" evidence="3">
    <location>
        <begin position="385"/>
        <end position="435"/>
    </location>
</feature>
<feature type="coiled-coil region" evidence="3">
    <location>
        <begin position="500"/>
        <end position="575"/>
    </location>
</feature>
<feature type="compositionally biased region" description="Polar residues" evidence="4">
    <location>
        <begin position="1"/>
        <end position="17"/>
    </location>
</feature>
<feature type="compositionally biased region" description="Low complexity" evidence="4">
    <location>
        <begin position="20"/>
        <end position="32"/>
    </location>
</feature>
<feature type="compositionally biased region" description="Low complexity" evidence="4">
    <location>
        <begin position="339"/>
        <end position="361"/>
    </location>
</feature>
<evidence type="ECO:0000250" key="1">
    <source>
        <dbReference type="UniProtKB" id="A8I4E9"/>
    </source>
</evidence>
<evidence type="ECO:0000250" key="2">
    <source>
        <dbReference type="UniProtKB" id="Q494V2"/>
    </source>
</evidence>
<evidence type="ECO:0000255" key="3"/>
<evidence type="ECO:0000256" key="4">
    <source>
        <dbReference type="SAM" id="MobiDB-lite"/>
    </source>
</evidence>
<evidence type="ECO:0000305" key="5"/>
<evidence type="ECO:0000312" key="6">
    <source>
        <dbReference type="EMBL" id="BAE00463.1"/>
    </source>
</evidence>
<name>CP100_MACFA</name>
<gene>
    <name evidence="2" type="primary">CFAP100</name>
    <name evidence="2" type="synonym">CCDC37</name>
    <name evidence="6" type="ORF">QtsA-11340</name>
</gene>
<organism>
    <name type="scientific">Macaca fascicularis</name>
    <name type="common">Crab-eating macaque</name>
    <name type="synonym">Cynomolgus monkey</name>
    <dbReference type="NCBI Taxonomy" id="9541"/>
    <lineage>
        <taxon>Eukaryota</taxon>
        <taxon>Metazoa</taxon>
        <taxon>Chordata</taxon>
        <taxon>Craniata</taxon>
        <taxon>Vertebrata</taxon>
        <taxon>Euteleostomi</taxon>
        <taxon>Mammalia</taxon>
        <taxon>Eutheria</taxon>
        <taxon>Euarchontoglires</taxon>
        <taxon>Primates</taxon>
        <taxon>Haplorrhini</taxon>
        <taxon>Catarrhini</taxon>
        <taxon>Cercopithecidae</taxon>
        <taxon>Cercopithecinae</taxon>
        <taxon>Macaca</taxon>
    </lineage>
</organism>
<dbReference type="EMBL" id="AB168339">
    <property type="protein sequence ID" value="BAE00463.1"/>
    <property type="status" value="ALT_SEQ"/>
    <property type="molecule type" value="mRNA"/>
</dbReference>
<dbReference type="STRING" id="9541.ENSMFAP00000030730"/>
<dbReference type="eggNOG" id="ENOG502QSDI">
    <property type="taxonomic scope" value="Eukaryota"/>
</dbReference>
<dbReference type="Proteomes" id="UP000233100">
    <property type="component" value="Unplaced"/>
</dbReference>
<dbReference type="GO" id="GO:0097545">
    <property type="term" value="C:axonemal doublet microtubule"/>
    <property type="evidence" value="ECO:0000250"/>
    <property type="project" value="UniProtKB"/>
</dbReference>
<dbReference type="GO" id="GO:0036064">
    <property type="term" value="C:ciliary basal body"/>
    <property type="evidence" value="ECO:0007669"/>
    <property type="project" value="TreeGrafter"/>
</dbReference>
<dbReference type="GO" id="GO:0031514">
    <property type="term" value="C:motile cilium"/>
    <property type="evidence" value="ECO:0000250"/>
    <property type="project" value="UniProtKB"/>
</dbReference>
<dbReference type="GO" id="GO:0070840">
    <property type="term" value="F:dynein complex binding"/>
    <property type="evidence" value="ECO:0000250"/>
    <property type="project" value="UniProtKB"/>
</dbReference>
<dbReference type="GO" id="GO:0003341">
    <property type="term" value="P:cilium movement"/>
    <property type="evidence" value="ECO:0000250"/>
    <property type="project" value="UniProtKB"/>
</dbReference>
<dbReference type="GO" id="GO:0036159">
    <property type="term" value="P:inner dynein arm assembly"/>
    <property type="evidence" value="ECO:0000250"/>
    <property type="project" value="UniProtKB"/>
</dbReference>
<dbReference type="InterPro" id="IPR051147">
    <property type="entry name" value="CFAP_domain-containing"/>
</dbReference>
<dbReference type="InterPro" id="IPR025252">
    <property type="entry name" value="DUF4200"/>
</dbReference>
<dbReference type="PANTHER" id="PTHR21683:SF5">
    <property type="entry name" value="CILIA- AND FLAGELLA-ASSOCIATED PROTEIN 100"/>
    <property type="match status" value="1"/>
</dbReference>
<dbReference type="PANTHER" id="PTHR21683">
    <property type="entry name" value="COILED-COIL DOMAIN-CONTAINING PROTEIN 42 LIKE-2-LIKE-RELATED"/>
    <property type="match status" value="1"/>
</dbReference>
<dbReference type="Pfam" id="PF13863">
    <property type="entry name" value="DUF4200"/>
    <property type="match status" value="1"/>
</dbReference>
<proteinExistence type="evidence at transcript level"/>
<keyword id="KW-0966">Cell projection</keyword>
<keyword id="KW-0969">Cilium</keyword>
<keyword id="KW-0175">Coiled coil</keyword>
<keyword id="KW-0963">Cytoplasm</keyword>
<keyword id="KW-0206">Cytoskeleton</keyword>
<keyword id="KW-1185">Reference proteome</keyword>
<comment type="function">
    <text evidence="1">May play a role in ciliary/flagellar motility by regulating the assembly and the activity of axonemal inner dynein arm.</text>
</comment>
<comment type="subcellular location">
    <subcellularLocation>
        <location evidence="1">Cytoplasm</location>
        <location evidence="1">Cytoskeleton</location>
        <location evidence="1">Cilium axoneme</location>
    </subcellularLocation>
</comment>
<comment type="similarity">
    <text evidence="5">Belongs to the CFAP100 family.</text>
</comment>
<comment type="sequence caution" evidence="5">
    <conflict type="erroneous termination">
        <sequence resource="EMBL-CDS" id="BAE00463"/>
    </conflict>
    <text>Truncated C-terminus.</text>
</comment>
<comment type="sequence caution" evidence="5">
    <conflict type="frameshift">
        <sequence resource="EMBL-CDS" id="BAE00463"/>
    </conflict>
</comment>
<reference key="1">
    <citation type="submission" date="2005-06" db="EMBL/GenBank/DDBJ databases">
        <title>DNA sequences of macaque genes expressed in brain or testis and its evolutionary implications.</title>
        <authorList>
            <consortium name="International consortium for macaque cDNA sequencing and analysis"/>
        </authorList>
    </citation>
    <scope>NUCLEOTIDE SEQUENCE [LARGE SCALE MRNA]</scope>
    <source>
        <tissue>Testis</tissue>
    </source>
</reference>
<accession>Q4R8V8</accession>
<sequence length="608" mass="70901">MSETLSNIVSKNMTNDKNSLESMNISSSSSAEENPKKQAKKXKERGPDPSANPFHLSGDVDFFLLRDQERNKALSERQQQKTMRVHEKMTYSSKVLAKHTSLRRQLQLEDKQEDLEARTEADHLRAFRDYNTWKLTLTKEKNVEPENMSGYLKQKRQMFLLQYTLDCKRREIQRLETLATKEEARLQQAEKSLAKDAALFDEFLRENDCSSVQAMKAAEKETKAKIEKILEIRDLTTQIVNIKSEISRFEDTLQHYKVYKDFLYKLSPKEWLEEQEKKHLFLKNAKEISEASKDGSVNSTPGDKGPGIKGKASSVWAKEGQGTKKPWRFLRLGRSLSYLSSPQQGSQPSESSGGNSRGSNSPIPLTQEDTDSDGEEPQLYFTEPQQLLDVFRELEEQNLSLIQNRQEMEETLEELSRTLKHTQIRMDREVNQLKQWVSTMMMSITKEEDTAAELELKARVFHFGEYKGDQQDKLLESLNWKVLDVYRNCIGTQQEANLGTVQMLTIIEHQLDELLENLERVPQVKIEQAERAKEKERRIRLREEKLQMQKILQEERLQRARARAQAEIKKKRGRTLVCRSQPPVHRIKQESEHTLMDKEKEELLFFFT</sequence>
<protein>
    <recommendedName>
        <fullName evidence="5">Cilia- and flagella-associated protein 100</fullName>
    </recommendedName>
    <alternativeName>
        <fullName evidence="2">Coiled-coil domain-containing protein 37</fullName>
    </alternativeName>
</protein>